<feature type="chain" id="PRO_0000183222" description="UDP-glucose 4-epimerase">
    <location>
        <begin position="1"/>
        <end position="328"/>
    </location>
</feature>
<feature type="active site" description="Proton acceptor" evidence="1">
    <location>
        <position position="149"/>
    </location>
</feature>
<feature type="binding site" evidence="1">
    <location>
        <begin position="20"/>
        <end position="21"/>
    </location>
    <ligand>
        <name>NAD(+)</name>
        <dbReference type="ChEBI" id="CHEBI:57540"/>
    </ligand>
</feature>
<feature type="binding site" evidence="1">
    <location>
        <begin position="41"/>
        <end position="46"/>
    </location>
    <ligand>
        <name>NAD(+)</name>
        <dbReference type="ChEBI" id="CHEBI:57540"/>
    </ligand>
</feature>
<feature type="binding site" evidence="1">
    <location>
        <begin position="57"/>
        <end position="58"/>
    </location>
    <ligand>
        <name>NAD(+)</name>
        <dbReference type="ChEBI" id="CHEBI:57540"/>
    </ligand>
</feature>
<feature type="binding site" evidence="1">
    <location>
        <begin position="77"/>
        <end position="81"/>
    </location>
    <ligand>
        <name>NAD(+)</name>
        <dbReference type="ChEBI" id="CHEBI:57540"/>
    </ligand>
</feature>
<feature type="binding site" evidence="1">
    <location>
        <position position="123"/>
    </location>
    <ligand>
        <name>NAD(+)</name>
        <dbReference type="ChEBI" id="CHEBI:57540"/>
    </ligand>
</feature>
<feature type="binding site" evidence="1">
    <location>
        <position position="123"/>
    </location>
    <ligand>
        <name>substrate</name>
    </ligand>
</feature>
<feature type="binding site" evidence="1">
    <location>
        <position position="149"/>
    </location>
    <ligand>
        <name>NAD(+)</name>
        <dbReference type="ChEBI" id="CHEBI:57540"/>
    </ligand>
</feature>
<feature type="binding site" evidence="1">
    <location>
        <position position="149"/>
    </location>
    <ligand>
        <name>substrate</name>
    </ligand>
</feature>
<feature type="binding site" evidence="1">
    <location>
        <position position="153"/>
    </location>
    <ligand>
        <name>NAD(+)</name>
        <dbReference type="ChEBI" id="CHEBI:57540"/>
    </ligand>
</feature>
<feature type="binding site" evidence="1">
    <location>
        <begin position="198"/>
        <end position="199"/>
    </location>
    <ligand>
        <name>substrate</name>
    </ligand>
</feature>
<feature type="binding site" evidence="1">
    <location>
        <begin position="215"/>
        <end position="217"/>
    </location>
    <ligand>
        <name>substrate</name>
    </ligand>
</feature>
<feature type="sequence variant" description="In strain: O22.">
    <original>V</original>
    <variation>M</variation>
    <location>
        <position position="133"/>
    </location>
</feature>
<feature type="sequence variant" description="In strain: O22 and MO45.">
    <original>G</original>
    <variation>D</variation>
    <location>
        <position position="242"/>
    </location>
</feature>
<keyword id="KW-0119">Carbohydrate metabolism</keyword>
<keyword id="KW-0299">Galactose metabolism</keyword>
<keyword id="KW-0413">Isomerase</keyword>
<keyword id="KW-0520">NAD</keyword>
<name>GALE_VIBCL</name>
<gene>
    <name type="primary">galE</name>
    <name type="synonym">wbfT</name>
</gene>
<comment type="function">
    <text evidence="1">Involved in the metabolism of galactose. Catalyzes the conversion of UDP-galactose (UDP-Gal) to UDP-glucose (UDP-Glc) through a mechanism involving the transient reduction of NAD (By similarity).</text>
</comment>
<comment type="catalytic activity">
    <reaction>
        <text>UDP-alpha-D-glucose = UDP-alpha-D-galactose</text>
        <dbReference type="Rhea" id="RHEA:22168"/>
        <dbReference type="ChEBI" id="CHEBI:58885"/>
        <dbReference type="ChEBI" id="CHEBI:66914"/>
        <dbReference type="EC" id="5.1.3.2"/>
    </reaction>
</comment>
<comment type="cofactor">
    <cofactor evidence="1">
        <name>NAD(+)</name>
        <dbReference type="ChEBI" id="CHEBI:57540"/>
    </cofactor>
</comment>
<comment type="pathway">
    <text>Bacterial outer membrane biogenesis; LPS O-antigen biosynthesis.</text>
</comment>
<comment type="subunit">
    <text evidence="1">Homodimer.</text>
</comment>
<comment type="similarity">
    <text evidence="2">Belongs to the NAD(P)-dependent epimerase/dehydratase family.</text>
</comment>
<comment type="sequence caution" evidence="2">
    <conflict type="erroneous initiation">
        <sequence resource="EMBL-CDS" id="BAA33640"/>
    </conflict>
    <text>Extended N-terminus.</text>
</comment>
<sequence>MCTGDRKMPKSILLTGSTGFVGTNLVKSLTLKSDYIVKSAVRHAVNKDDGLLFEVGDINASTDFELPLKNTTVVVHCAARAHVMDDKEAEPLTLYREVNTAGTVNLAKQAIDSGVKRFIFISSIKVNGEGTLVGCPFKTEDNHAPEDDYGLSKSEAEKQLVALAKDSSMEVVIIRPTIVYGPGVKANFASLMRLVSKGIPLPFGSITQNKRSLVSINNLVDLIVTCIDHPKAANQVFLVSDGHDVSTAEMVRELAIALDKPTWQLPVPIWCYKLFGKLFGKSDIVDRLTGTLQVDISHTKETLGWKPPQTLQEGFKQTAQAFLQANNR</sequence>
<organism>
    <name type="scientific">Vibrio cholerae</name>
    <dbReference type="NCBI Taxonomy" id="666"/>
    <lineage>
        <taxon>Bacteria</taxon>
        <taxon>Pseudomonadati</taxon>
        <taxon>Pseudomonadota</taxon>
        <taxon>Gammaproteobacteria</taxon>
        <taxon>Vibrionales</taxon>
        <taxon>Vibrionaceae</taxon>
        <taxon>Vibrio</taxon>
    </lineage>
</organism>
<dbReference type="EC" id="5.1.3.2"/>
<dbReference type="EMBL" id="U47057">
    <property type="protein sequence ID" value="AAC46247.1"/>
    <property type="molecule type" value="Genomic_DNA"/>
</dbReference>
<dbReference type="EMBL" id="AB012956">
    <property type="protein sequence ID" value="BAA33610.1"/>
    <property type="molecule type" value="Genomic_DNA"/>
</dbReference>
<dbReference type="EMBL" id="AB012957">
    <property type="protein sequence ID" value="BAA33640.1"/>
    <property type="status" value="ALT_INIT"/>
    <property type="molecule type" value="Genomic_DNA"/>
</dbReference>
<dbReference type="PIR" id="S70885">
    <property type="entry name" value="S70885"/>
</dbReference>
<dbReference type="PIR" id="T44336">
    <property type="entry name" value="T44336"/>
</dbReference>
<dbReference type="RefSeq" id="WP_000337357.1">
    <property type="nucleotide sequence ID" value="NZ_SISO01000009.1"/>
</dbReference>
<dbReference type="SMR" id="Q56623"/>
<dbReference type="UniPathway" id="UPA00281"/>
<dbReference type="GO" id="GO:0003978">
    <property type="term" value="F:UDP-glucose 4-epimerase activity"/>
    <property type="evidence" value="ECO:0007669"/>
    <property type="project" value="UniProtKB-EC"/>
</dbReference>
<dbReference type="GO" id="GO:0006012">
    <property type="term" value="P:galactose metabolic process"/>
    <property type="evidence" value="ECO:0007669"/>
    <property type="project" value="UniProtKB-KW"/>
</dbReference>
<dbReference type="GO" id="GO:0009243">
    <property type="term" value="P:O antigen biosynthetic process"/>
    <property type="evidence" value="ECO:0007669"/>
    <property type="project" value="UniProtKB-UniPathway"/>
</dbReference>
<dbReference type="CDD" id="cd05232">
    <property type="entry name" value="UDP_G4E_4_SDR_e"/>
    <property type="match status" value="1"/>
</dbReference>
<dbReference type="Gene3D" id="3.40.50.720">
    <property type="entry name" value="NAD(P)-binding Rossmann-like Domain"/>
    <property type="match status" value="1"/>
</dbReference>
<dbReference type="InterPro" id="IPR001509">
    <property type="entry name" value="Epimerase_deHydtase"/>
</dbReference>
<dbReference type="InterPro" id="IPR036291">
    <property type="entry name" value="NAD(P)-bd_dom_sf"/>
</dbReference>
<dbReference type="PANTHER" id="PTHR43000">
    <property type="entry name" value="DTDP-D-GLUCOSE 4,6-DEHYDRATASE-RELATED"/>
    <property type="match status" value="1"/>
</dbReference>
<dbReference type="Pfam" id="PF01370">
    <property type="entry name" value="Epimerase"/>
    <property type="match status" value="1"/>
</dbReference>
<dbReference type="SUPFAM" id="SSF51735">
    <property type="entry name" value="NAD(P)-binding Rossmann-fold domains"/>
    <property type="match status" value="1"/>
</dbReference>
<evidence type="ECO:0000250" key="1"/>
<evidence type="ECO:0000305" key="2"/>
<reference key="1">
    <citation type="journal article" date="1996" name="Mol. Microbiol.">
        <title>Cloning and sequence of a region encoding a surface polysaccharide of Vibrio cholerae O139 and characterization of the insertion site in the chromosome of Vibrio cholerae O1.</title>
        <authorList>
            <person name="Comstock L.E."/>
            <person name="Michalski J.M."/>
            <person name="Johnson J.A."/>
            <person name="Morris J.G. Jr."/>
            <person name="Kaper J.B."/>
        </authorList>
    </citation>
    <scope>NUCLEOTIDE SEQUENCE [GENOMIC DNA]</scope>
    <source>
        <strain>AI-1837 / Serotype O139</strain>
    </source>
</reference>
<reference key="2">
    <citation type="journal article" date="1999" name="Gene">
        <title>The genes responsible for O-antigen synthesis of Vibrio cholerae O139 are closely related to those of Vibrio cholerae O22.</title>
        <authorList>
            <person name="Yamasaki S."/>
            <person name="Shimizu T."/>
            <person name="Hoshino K."/>
            <person name="Ho S.-T."/>
            <person name="Shimada T."/>
            <person name="Nair G.B."/>
            <person name="Takeda Y."/>
        </authorList>
    </citation>
    <scope>NUCLEOTIDE SEQUENCE [GENOMIC DNA]</scope>
    <source>
        <strain>ATCC 51394 / MO45 / Serotype O139</strain>
        <strain>O22</strain>
    </source>
</reference>
<accession>Q56623</accession>
<accession>O87141</accession>
<accession>Q9S1B8</accession>
<protein>
    <recommendedName>
        <fullName>UDP-glucose 4-epimerase</fullName>
        <ecNumber>5.1.3.2</ecNumber>
    </recommendedName>
    <alternativeName>
        <fullName>Galactowaldenase</fullName>
    </alternativeName>
    <alternativeName>
        <fullName>UDP-galactose 4-epimerase</fullName>
    </alternativeName>
</protein>
<proteinExistence type="inferred from homology"/>